<accession>O08462</accession>
<reference key="1">
    <citation type="journal article" date="1997" name="J. Bacteriol.">
        <title>Identification and characterization of an operon of Helicobacter pylori that is involved in motility and stress adaptation.</title>
        <authorList>
            <person name="Beier D."/>
            <person name="Spohn G."/>
            <person name="Rappuoli R."/>
            <person name="Scarlato V."/>
        </authorList>
    </citation>
    <scope>NUCLEOTIDE SEQUENCE [GENOMIC DNA]</scope>
    <source>
        <strain>DSM 4867 / CCUG 17874 / NCTC 11638</strain>
    </source>
</reference>
<keyword id="KW-0067">ATP-binding</keyword>
<keyword id="KW-1003">Cell membrane</keyword>
<keyword id="KW-0186">Copper</keyword>
<keyword id="KW-0187">Copper transport</keyword>
<keyword id="KW-0406">Ion transport</keyword>
<keyword id="KW-0460">Magnesium</keyword>
<keyword id="KW-0472">Membrane</keyword>
<keyword id="KW-0479">Metal-binding</keyword>
<keyword id="KW-0547">Nucleotide-binding</keyword>
<keyword id="KW-0597">Phosphoprotein</keyword>
<keyword id="KW-1278">Translocase</keyword>
<keyword id="KW-0812">Transmembrane</keyword>
<keyword id="KW-1133">Transmembrane helix</keyword>
<keyword id="KW-0813">Transport</keyword>
<organism>
    <name type="scientific">Helicobacter pylori</name>
    <name type="common">Campylobacter pylori</name>
    <dbReference type="NCBI Taxonomy" id="210"/>
    <lineage>
        <taxon>Bacteria</taxon>
        <taxon>Pseudomonadati</taxon>
        <taxon>Campylobacterota</taxon>
        <taxon>Epsilonproteobacteria</taxon>
        <taxon>Campylobacterales</taxon>
        <taxon>Helicobacteraceae</taxon>
        <taxon>Helicobacter</taxon>
    </lineage>
</organism>
<proteinExistence type="inferred from homology"/>
<feature type="chain" id="PRO_0000046173" description="Copper-transporting ATPase">
    <location>
        <begin position="1"/>
        <end position="745"/>
    </location>
</feature>
<feature type="topological domain" description="Cytoplasmic" evidence="2">
    <location>
        <begin position="1"/>
        <end position="83"/>
    </location>
</feature>
<feature type="transmembrane region" description="Helical" evidence="2">
    <location>
        <begin position="84"/>
        <end position="104"/>
    </location>
</feature>
<feature type="topological domain" description="Extracellular" evidence="2">
    <location>
        <begin position="105"/>
        <end position="124"/>
    </location>
</feature>
<feature type="transmembrane region" description="Helical" evidence="2">
    <location>
        <begin position="125"/>
        <end position="144"/>
    </location>
</feature>
<feature type="topological domain" description="Cytoplasmic" evidence="2">
    <location>
        <begin position="145"/>
        <end position="151"/>
    </location>
</feature>
<feature type="transmembrane region" description="Helical" evidence="2">
    <location>
        <begin position="152"/>
        <end position="172"/>
    </location>
</feature>
<feature type="topological domain" description="Extracellular" evidence="2">
    <location>
        <begin position="173"/>
        <end position="194"/>
    </location>
</feature>
<feature type="transmembrane region" description="Helical" evidence="2">
    <location>
        <begin position="195"/>
        <end position="215"/>
    </location>
</feature>
<feature type="topological domain" description="Cytoplasmic" evidence="2">
    <location>
        <begin position="216"/>
        <end position="343"/>
    </location>
</feature>
<feature type="transmembrane region" description="Helical" evidence="2">
    <location>
        <begin position="344"/>
        <end position="366"/>
    </location>
</feature>
<feature type="topological domain" description="Extracellular" evidence="2">
    <location>
        <begin position="367"/>
        <end position="379"/>
    </location>
</feature>
<feature type="transmembrane region" description="Helical" evidence="2">
    <location>
        <begin position="380"/>
        <end position="397"/>
    </location>
</feature>
<feature type="topological domain" description="Cytoplasmic" evidence="2">
    <location>
        <begin position="398"/>
        <end position="685"/>
    </location>
</feature>
<feature type="transmembrane region" description="Helical" evidence="2">
    <location>
        <begin position="686"/>
        <end position="705"/>
    </location>
</feature>
<feature type="topological domain" description="Extracellular" evidence="2">
    <location>
        <begin position="706"/>
        <end position="716"/>
    </location>
</feature>
<feature type="transmembrane region" description="Helical" evidence="2">
    <location>
        <begin position="717"/>
        <end position="735"/>
    </location>
</feature>
<feature type="topological domain" description="Cytoplasmic" evidence="2">
    <location>
        <begin position="736"/>
        <end position="745"/>
    </location>
</feature>
<feature type="domain" description="HMA" evidence="3">
    <location>
        <begin position="1"/>
        <end position="67"/>
    </location>
</feature>
<feature type="active site" description="4-aspartylphosphate intermediate" evidence="1">
    <location>
        <position position="435"/>
    </location>
</feature>
<feature type="binding site" evidence="3">
    <location>
        <position position="12"/>
    </location>
    <ligand>
        <name>Cu cation</name>
        <dbReference type="ChEBI" id="CHEBI:23378"/>
    </ligand>
</feature>
<feature type="binding site" evidence="3">
    <location>
        <position position="15"/>
    </location>
    <ligand>
        <name>Cu cation</name>
        <dbReference type="ChEBI" id="CHEBI:23378"/>
    </ligand>
</feature>
<feature type="binding site">
    <location>
        <position position="631"/>
    </location>
    <ligand>
        <name>Mg(2+)</name>
        <dbReference type="ChEBI" id="CHEBI:18420"/>
    </ligand>
</feature>
<feature type="binding site">
    <location>
        <position position="635"/>
    </location>
    <ligand>
        <name>Mg(2+)</name>
        <dbReference type="ChEBI" id="CHEBI:18420"/>
    </ligand>
</feature>
<protein>
    <recommendedName>
        <fullName>Copper-transporting ATPase</fullName>
        <ecNumber>7.2.2.9</ecNumber>
    </recommendedName>
</protein>
<name>COPA3_HELPX</name>
<comment type="function">
    <text>Probably involved in copper export.</text>
</comment>
<comment type="catalytic activity">
    <reaction>
        <text>Cu(2+)(in) + ATP + H2O = Cu(2+)(out) + ADP + phosphate + H(+)</text>
        <dbReference type="Rhea" id="RHEA:10376"/>
        <dbReference type="ChEBI" id="CHEBI:15377"/>
        <dbReference type="ChEBI" id="CHEBI:15378"/>
        <dbReference type="ChEBI" id="CHEBI:29036"/>
        <dbReference type="ChEBI" id="CHEBI:30616"/>
        <dbReference type="ChEBI" id="CHEBI:43474"/>
        <dbReference type="ChEBI" id="CHEBI:456216"/>
        <dbReference type="EC" id="7.2.2.9"/>
    </reaction>
</comment>
<comment type="subcellular location">
    <subcellularLocation>
        <location>Cell membrane</location>
        <topology>Multi-pass membrane protein</topology>
    </subcellularLocation>
</comment>
<comment type="similarity">
    <text evidence="4">Belongs to the cation transport ATPase (P-type) (TC 3.A.3) family. Type IB subfamily.</text>
</comment>
<evidence type="ECO:0000250" key="1"/>
<evidence type="ECO:0000255" key="2"/>
<evidence type="ECO:0000255" key="3">
    <source>
        <dbReference type="PROSITE-ProRule" id="PRU00280"/>
    </source>
</evidence>
<evidence type="ECO:0000305" key="4"/>
<gene>
    <name type="primary">copA</name>
</gene>
<sequence length="745" mass="81845">MKESFYIEGMTCTACSSGIERSLGRKSFVKKIEVSLLNKSANIEFNENETNLDEIFKLIEKLGYSPKKTLAEEKKEFFSPNVKLALAVIFTLFVVYLSMGAMLSPSLLPESLLAINNHSNFLNACLQLIGALIVMHLGRDFYIQGFKALWHRQPNMSSLIAIGTSAALISSLWQLYLVYTNHYTDQWSYGHYYFESVCVILMFVMVGKRIENVSKDKALDAMQALMKNAPKTALKMQNNQQIEVLVDSIVVGDILKVLPGSAIAVDGEIIEGEGELDESMLSGEALPVYKKVGDKVFSGTLNSHTSFLMKATQNNKNSTLSQIIEMIHNAQSSKAEISRLADKVSSVFVPSVIAIAILAFVVWLIIAPKPDFWWNFGIALEVFVSVLVISCPCALGLATPMSILVANQKASSLGLFFKDAKSLEKARLVNTIVFDKTGTLTNGKPVVKSVHSKIELLELLSLAGSIEKSSEHVIAKGIVEYAKERNAPLKEMSEVKVKTGFGISAKTDYQGIKEIIKVGNSEFFNPINTLEIKENGILVFVGRAISEKEDELLGVFVLEDLPKKGVKEHIAQIKNLGINTFLLSGDNRENVKKCALELGIDGYISNAKPQDKLNKIKELKEQGQIVMMVGDGLNDAPSLAMNDVAVVMAKGSDVSVQAADIVSFNNDIKSVYSAIKLSQATIKNIKENLFWAFCYNSVFIPLACGVLYKANIMLSPAIAGLAMSLSSVSVVLNSQRLRNFKIKDH</sequence>
<dbReference type="EC" id="7.2.2.9"/>
<dbReference type="EMBL" id="U97567">
    <property type="protein sequence ID" value="AAB66380.1"/>
    <property type="molecule type" value="Genomic_DNA"/>
</dbReference>
<dbReference type="SMR" id="O08462"/>
<dbReference type="eggNOG" id="COG2217">
    <property type="taxonomic scope" value="Bacteria"/>
</dbReference>
<dbReference type="GO" id="GO:0005886">
    <property type="term" value="C:plasma membrane"/>
    <property type="evidence" value="ECO:0007669"/>
    <property type="project" value="UniProtKB-SubCell"/>
</dbReference>
<dbReference type="GO" id="GO:0005524">
    <property type="term" value="F:ATP binding"/>
    <property type="evidence" value="ECO:0007669"/>
    <property type="project" value="UniProtKB-KW"/>
</dbReference>
<dbReference type="GO" id="GO:0016887">
    <property type="term" value="F:ATP hydrolysis activity"/>
    <property type="evidence" value="ECO:0007669"/>
    <property type="project" value="InterPro"/>
</dbReference>
<dbReference type="GO" id="GO:0005507">
    <property type="term" value="F:copper ion binding"/>
    <property type="evidence" value="ECO:0007669"/>
    <property type="project" value="TreeGrafter"/>
</dbReference>
<dbReference type="GO" id="GO:0043682">
    <property type="term" value="F:P-type divalent copper transporter activity"/>
    <property type="evidence" value="ECO:0007669"/>
    <property type="project" value="UniProtKB-EC"/>
</dbReference>
<dbReference type="GO" id="GO:0055070">
    <property type="term" value="P:copper ion homeostasis"/>
    <property type="evidence" value="ECO:0007669"/>
    <property type="project" value="TreeGrafter"/>
</dbReference>
<dbReference type="CDD" id="cd00371">
    <property type="entry name" value="HMA"/>
    <property type="match status" value="1"/>
</dbReference>
<dbReference type="CDD" id="cd02094">
    <property type="entry name" value="P-type_ATPase_Cu-like"/>
    <property type="match status" value="1"/>
</dbReference>
<dbReference type="FunFam" id="3.30.70.100:FF:000001">
    <property type="entry name" value="ATPase copper transporting beta"/>
    <property type="match status" value="1"/>
</dbReference>
<dbReference type="FunFam" id="2.70.150.10:FF:000020">
    <property type="entry name" value="Copper-exporting P-type ATPase A"/>
    <property type="match status" value="1"/>
</dbReference>
<dbReference type="Gene3D" id="3.30.70.100">
    <property type="match status" value="1"/>
</dbReference>
<dbReference type="Gene3D" id="3.40.1110.10">
    <property type="entry name" value="Calcium-transporting ATPase, cytoplasmic domain N"/>
    <property type="match status" value="1"/>
</dbReference>
<dbReference type="Gene3D" id="2.70.150.10">
    <property type="entry name" value="Calcium-transporting ATPase, cytoplasmic transduction domain A"/>
    <property type="match status" value="1"/>
</dbReference>
<dbReference type="Gene3D" id="3.40.50.1000">
    <property type="entry name" value="HAD superfamily/HAD-like"/>
    <property type="match status" value="1"/>
</dbReference>
<dbReference type="InterPro" id="IPR023299">
    <property type="entry name" value="ATPase_P-typ_cyto_dom_N"/>
</dbReference>
<dbReference type="InterPro" id="IPR018303">
    <property type="entry name" value="ATPase_P-typ_P_site"/>
</dbReference>
<dbReference type="InterPro" id="IPR023298">
    <property type="entry name" value="ATPase_P-typ_TM_dom_sf"/>
</dbReference>
<dbReference type="InterPro" id="IPR008250">
    <property type="entry name" value="ATPase_P-typ_transduc_dom_A_sf"/>
</dbReference>
<dbReference type="InterPro" id="IPR036412">
    <property type="entry name" value="HAD-like_sf"/>
</dbReference>
<dbReference type="InterPro" id="IPR023214">
    <property type="entry name" value="HAD_sf"/>
</dbReference>
<dbReference type="InterPro" id="IPR017969">
    <property type="entry name" value="Heavy-metal-associated_CS"/>
</dbReference>
<dbReference type="InterPro" id="IPR006121">
    <property type="entry name" value="HMA_dom"/>
</dbReference>
<dbReference type="InterPro" id="IPR036163">
    <property type="entry name" value="HMA_dom_sf"/>
</dbReference>
<dbReference type="InterPro" id="IPR027256">
    <property type="entry name" value="P-typ_ATPase_IB"/>
</dbReference>
<dbReference type="InterPro" id="IPR001757">
    <property type="entry name" value="P_typ_ATPase"/>
</dbReference>
<dbReference type="InterPro" id="IPR044492">
    <property type="entry name" value="P_typ_ATPase_HD_dom"/>
</dbReference>
<dbReference type="NCBIfam" id="TIGR01511">
    <property type="entry name" value="ATPase-IB1_Cu"/>
    <property type="match status" value="1"/>
</dbReference>
<dbReference type="NCBIfam" id="TIGR01525">
    <property type="entry name" value="ATPase-IB_hvy"/>
    <property type="match status" value="1"/>
</dbReference>
<dbReference type="NCBIfam" id="TIGR01494">
    <property type="entry name" value="ATPase_P-type"/>
    <property type="match status" value="1"/>
</dbReference>
<dbReference type="PANTHER" id="PTHR43520">
    <property type="entry name" value="ATP7, ISOFORM B"/>
    <property type="match status" value="1"/>
</dbReference>
<dbReference type="PANTHER" id="PTHR43520:SF8">
    <property type="entry name" value="P-TYPE CU(+) TRANSPORTER"/>
    <property type="match status" value="1"/>
</dbReference>
<dbReference type="Pfam" id="PF00122">
    <property type="entry name" value="E1-E2_ATPase"/>
    <property type="match status" value="1"/>
</dbReference>
<dbReference type="Pfam" id="PF00403">
    <property type="entry name" value="HMA"/>
    <property type="match status" value="1"/>
</dbReference>
<dbReference type="Pfam" id="PF00702">
    <property type="entry name" value="Hydrolase"/>
    <property type="match status" value="1"/>
</dbReference>
<dbReference type="PRINTS" id="PR00119">
    <property type="entry name" value="CATATPASE"/>
</dbReference>
<dbReference type="PRINTS" id="PR00943">
    <property type="entry name" value="CUATPASE"/>
</dbReference>
<dbReference type="SFLD" id="SFLDG00002">
    <property type="entry name" value="C1.7:_P-type_atpase_like"/>
    <property type="match status" value="1"/>
</dbReference>
<dbReference type="SFLD" id="SFLDF00027">
    <property type="entry name" value="p-type_atpase"/>
    <property type="match status" value="1"/>
</dbReference>
<dbReference type="SUPFAM" id="SSF81653">
    <property type="entry name" value="Calcium ATPase, transduction domain A"/>
    <property type="match status" value="1"/>
</dbReference>
<dbReference type="SUPFAM" id="SSF81665">
    <property type="entry name" value="Calcium ATPase, transmembrane domain M"/>
    <property type="match status" value="1"/>
</dbReference>
<dbReference type="SUPFAM" id="SSF56784">
    <property type="entry name" value="HAD-like"/>
    <property type="match status" value="1"/>
</dbReference>
<dbReference type="SUPFAM" id="SSF55008">
    <property type="entry name" value="HMA, heavy metal-associated domain"/>
    <property type="match status" value="1"/>
</dbReference>
<dbReference type="PROSITE" id="PS00154">
    <property type="entry name" value="ATPASE_E1_E2"/>
    <property type="match status" value="1"/>
</dbReference>
<dbReference type="PROSITE" id="PS01047">
    <property type="entry name" value="HMA_1"/>
    <property type="match status" value="1"/>
</dbReference>
<dbReference type="PROSITE" id="PS50846">
    <property type="entry name" value="HMA_2"/>
    <property type="match status" value="1"/>
</dbReference>